<sequence>MKITRSRCLILSFVLVCGLVPEVTADVEEATDGLSTTQEPIWLTDVPATVELIAAAEVAVIGFFQDLEIPIVSVFRSMARQFQDVSFGISNHSEVLTHYNVTSNSICLFRLVDDQQLHLNAEDIENLDAAKLSRFIHVNNLHWVTEYSPMIAAGLFNTMVQTHLLLMMKKTSPEYEESMRRYREAAKLFQGQILFVLVDSGKRENGKVMSYFKLKESQLPALAIYESVDDKWDTLPIAEVTVEKVRGFCEGFLKGLLQRDHEAEGDSGKEEL</sequence>
<evidence type="ECO:0000250" key="1">
    <source>
        <dbReference type="UniProtKB" id="Q96DN0"/>
    </source>
</evidence>
<evidence type="ECO:0000255" key="2"/>
<evidence type="ECO:0000305" key="3"/>
<accession>Q9D8U3</accession>
<accession>Q3SX97</accession>
<organism>
    <name type="scientific">Mus musculus</name>
    <name type="common">Mouse</name>
    <dbReference type="NCBI Taxonomy" id="10090"/>
    <lineage>
        <taxon>Eukaryota</taxon>
        <taxon>Metazoa</taxon>
        <taxon>Chordata</taxon>
        <taxon>Craniata</taxon>
        <taxon>Vertebrata</taxon>
        <taxon>Euteleostomi</taxon>
        <taxon>Mammalia</taxon>
        <taxon>Eutheria</taxon>
        <taxon>Euarchontoglires</taxon>
        <taxon>Glires</taxon>
        <taxon>Rodentia</taxon>
        <taxon>Myomorpha</taxon>
        <taxon>Muroidea</taxon>
        <taxon>Muridae</taxon>
        <taxon>Murinae</taxon>
        <taxon>Mus</taxon>
        <taxon>Mus</taxon>
    </lineage>
</organism>
<keyword id="KW-0256">Endoplasmic reticulum</keyword>
<keyword id="KW-0325">Glycoprotein</keyword>
<keyword id="KW-1185">Reference proteome</keyword>
<keyword id="KW-0732">Signal</keyword>
<keyword id="KW-0834">Unfolded protein response</keyword>
<comment type="function">
    <text evidence="1">Specifically binds unfolded proteins and may recruit protein disulfide isomerase PDIA3 to unfolded substrates. Binds protein substrates via a hydrophobic pocket in the C-terminal domain. May play a role in the unfolded stress response.</text>
</comment>
<comment type="subunit">
    <text evidence="1">Interacts with PDIA3.</text>
</comment>
<comment type="subcellular location">
    <subcellularLocation>
        <location evidence="1">Endoplasmic reticulum lumen</location>
    </subcellularLocation>
</comment>
<comment type="similarity">
    <text evidence="3">Belongs to the protein disulfide isomerase family.</text>
</comment>
<comment type="caution">
    <text evidence="3">Does not contain a CXXC active site motif indicating that it is a catalytically redox-inactive member of the protein disulfide isomerase family.</text>
</comment>
<reference key="1">
    <citation type="journal article" date="2005" name="Science">
        <title>The transcriptional landscape of the mammalian genome.</title>
        <authorList>
            <person name="Carninci P."/>
            <person name="Kasukawa T."/>
            <person name="Katayama S."/>
            <person name="Gough J."/>
            <person name="Frith M.C."/>
            <person name="Maeda N."/>
            <person name="Oyama R."/>
            <person name="Ravasi T."/>
            <person name="Lenhard B."/>
            <person name="Wells C."/>
            <person name="Kodzius R."/>
            <person name="Shimokawa K."/>
            <person name="Bajic V.B."/>
            <person name="Brenner S.E."/>
            <person name="Batalov S."/>
            <person name="Forrest A.R."/>
            <person name="Zavolan M."/>
            <person name="Davis M.J."/>
            <person name="Wilming L.G."/>
            <person name="Aidinis V."/>
            <person name="Allen J.E."/>
            <person name="Ambesi-Impiombato A."/>
            <person name="Apweiler R."/>
            <person name="Aturaliya R.N."/>
            <person name="Bailey T.L."/>
            <person name="Bansal M."/>
            <person name="Baxter L."/>
            <person name="Beisel K.W."/>
            <person name="Bersano T."/>
            <person name="Bono H."/>
            <person name="Chalk A.M."/>
            <person name="Chiu K.P."/>
            <person name="Choudhary V."/>
            <person name="Christoffels A."/>
            <person name="Clutterbuck D.R."/>
            <person name="Crowe M.L."/>
            <person name="Dalla E."/>
            <person name="Dalrymple B.P."/>
            <person name="de Bono B."/>
            <person name="Della Gatta G."/>
            <person name="di Bernardo D."/>
            <person name="Down T."/>
            <person name="Engstrom P."/>
            <person name="Fagiolini M."/>
            <person name="Faulkner G."/>
            <person name="Fletcher C.F."/>
            <person name="Fukushima T."/>
            <person name="Furuno M."/>
            <person name="Futaki S."/>
            <person name="Gariboldi M."/>
            <person name="Georgii-Hemming P."/>
            <person name="Gingeras T.R."/>
            <person name="Gojobori T."/>
            <person name="Green R.E."/>
            <person name="Gustincich S."/>
            <person name="Harbers M."/>
            <person name="Hayashi Y."/>
            <person name="Hensch T.K."/>
            <person name="Hirokawa N."/>
            <person name="Hill D."/>
            <person name="Huminiecki L."/>
            <person name="Iacono M."/>
            <person name="Ikeo K."/>
            <person name="Iwama A."/>
            <person name="Ishikawa T."/>
            <person name="Jakt M."/>
            <person name="Kanapin A."/>
            <person name="Katoh M."/>
            <person name="Kawasawa Y."/>
            <person name="Kelso J."/>
            <person name="Kitamura H."/>
            <person name="Kitano H."/>
            <person name="Kollias G."/>
            <person name="Krishnan S.P."/>
            <person name="Kruger A."/>
            <person name="Kummerfeld S.K."/>
            <person name="Kurochkin I.V."/>
            <person name="Lareau L.F."/>
            <person name="Lazarevic D."/>
            <person name="Lipovich L."/>
            <person name="Liu J."/>
            <person name="Liuni S."/>
            <person name="McWilliam S."/>
            <person name="Madan Babu M."/>
            <person name="Madera M."/>
            <person name="Marchionni L."/>
            <person name="Matsuda H."/>
            <person name="Matsuzawa S."/>
            <person name="Miki H."/>
            <person name="Mignone F."/>
            <person name="Miyake S."/>
            <person name="Morris K."/>
            <person name="Mottagui-Tabar S."/>
            <person name="Mulder N."/>
            <person name="Nakano N."/>
            <person name="Nakauchi H."/>
            <person name="Ng P."/>
            <person name="Nilsson R."/>
            <person name="Nishiguchi S."/>
            <person name="Nishikawa S."/>
            <person name="Nori F."/>
            <person name="Ohara O."/>
            <person name="Okazaki Y."/>
            <person name="Orlando V."/>
            <person name="Pang K.C."/>
            <person name="Pavan W.J."/>
            <person name="Pavesi G."/>
            <person name="Pesole G."/>
            <person name="Petrovsky N."/>
            <person name="Piazza S."/>
            <person name="Reed J."/>
            <person name="Reid J.F."/>
            <person name="Ring B.Z."/>
            <person name="Ringwald M."/>
            <person name="Rost B."/>
            <person name="Ruan Y."/>
            <person name="Salzberg S.L."/>
            <person name="Sandelin A."/>
            <person name="Schneider C."/>
            <person name="Schoenbach C."/>
            <person name="Sekiguchi K."/>
            <person name="Semple C.A."/>
            <person name="Seno S."/>
            <person name="Sessa L."/>
            <person name="Sheng Y."/>
            <person name="Shibata Y."/>
            <person name="Shimada H."/>
            <person name="Shimada K."/>
            <person name="Silva D."/>
            <person name="Sinclair B."/>
            <person name="Sperling S."/>
            <person name="Stupka E."/>
            <person name="Sugiura K."/>
            <person name="Sultana R."/>
            <person name="Takenaka Y."/>
            <person name="Taki K."/>
            <person name="Tammoja K."/>
            <person name="Tan S.L."/>
            <person name="Tang S."/>
            <person name="Taylor M.S."/>
            <person name="Tegner J."/>
            <person name="Teichmann S.A."/>
            <person name="Ueda H.R."/>
            <person name="van Nimwegen E."/>
            <person name="Verardo R."/>
            <person name="Wei C.L."/>
            <person name="Yagi K."/>
            <person name="Yamanishi H."/>
            <person name="Zabarovsky E."/>
            <person name="Zhu S."/>
            <person name="Zimmer A."/>
            <person name="Hide W."/>
            <person name="Bult C."/>
            <person name="Grimmond S.M."/>
            <person name="Teasdale R.D."/>
            <person name="Liu E.T."/>
            <person name="Brusic V."/>
            <person name="Quackenbush J."/>
            <person name="Wahlestedt C."/>
            <person name="Mattick J.S."/>
            <person name="Hume D.A."/>
            <person name="Kai C."/>
            <person name="Sasaki D."/>
            <person name="Tomaru Y."/>
            <person name="Fukuda S."/>
            <person name="Kanamori-Katayama M."/>
            <person name="Suzuki M."/>
            <person name="Aoki J."/>
            <person name="Arakawa T."/>
            <person name="Iida J."/>
            <person name="Imamura K."/>
            <person name="Itoh M."/>
            <person name="Kato T."/>
            <person name="Kawaji H."/>
            <person name="Kawagashira N."/>
            <person name="Kawashima T."/>
            <person name="Kojima M."/>
            <person name="Kondo S."/>
            <person name="Konno H."/>
            <person name="Nakano K."/>
            <person name="Ninomiya N."/>
            <person name="Nishio T."/>
            <person name="Okada M."/>
            <person name="Plessy C."/>
            <person name="Shibata K."/>
            <person name="Shiraki T."/>
            <person name="Suzuki S."/>
            <person name="Tagami M."/>
            <person name="Waki K."/>
            <person name="Watahiki A."/>
            <person name="Okamura-Oho Y."/>
            <person name="Suzuki H."/>
            <person name="Kawai J."/>
            <person name="Hayashizaki Y."/>
        </authorList>
    </citation>
    <scope>NUCLEOTIDE SEQUENCE [LARGE SCALE MRNA]</scope>
    <source>
        <strain>C57BL/6J</strain>
        <tissue>Pancreas</tissue>
    </source>
</reference>
<reference key="2">
    <citation type="journal article" date="2004" name="Genome Res.">
        <title>The status, quality, and expansion of the NIH full-length cDNA project: the Mammalian Gene Collection (MGC).</title>
        <authorList>
            <consortium name="The MGC Project Team"/>
        </authorList>
    </citation>
    <scope>NUCLEOTIDE SEQUENCE [LARGE SCALE MRNA]</scope>
</reference>
<reference key="3">
    <citation type="journal article" date="2010" name="Cell">
        <title>A tissue-specific atlas of mouse protein phosphorylation and expression.</title>
        <authorList>
            <person name="Huttlin E.L."/>
            <person name="Jedrychowski M.P."/>
            <person name="Elias J.E."/>
            <person name="Goswami T."/>
            <person name="Rad R."/>
            <person name="Beausoleil S.A."/>
            <person name="Villen J."/>
            <person name="Haas W."/>
            <person name="Sowa M.E."/>
            <person name="Gygi S.P."/>
        </authorList>
    </citation>
    <scope>IDENTIFICATION BY MASS SPECTROMETRY [LARGE SCALE ANALYSIS]</scope>
    <source>
        <tissue>Pancreas</tissue>
        <tissue>Spleen</tissue>
    </source>
</reference>
<dbReference type="EMBL" id="AK007684">
    <property type="protein sequence ID" value="BAB25188.1"/>
    <property type="molecule type" value="mRNA"/>
</dbReference>
<dbReference type="EMBL" id="AK131830">
    <property type="protein sequence ID" value="BAE20822.1"/>
    <property type="molecule type" value="mRNA"/>
</dbReference>
<dbReference type="EMBL" id="BC104406">
    <property type="protein sequence ID" value="AAI04407.1"/>
    <property type="molecule type" value="mRNA"/>
</dbReference>
<dbReference type="EMBL" id="BC104407">
    <property type="protein sequence ID" value="AAI04408.1"/>
    <property type="molecule type" value="mRNA"/>
</dbReference>
<dbReference type="CCDS" id="CCDS20660.1"/>
<dbReference type="RefSeq" id="NP_081259.1">
    <property type="nucleotide sequence ID" value="NM_026983.2"/>
</dbReference>
<dbReference type="SMR" id="Q9D8U3"/>
<dbReference type="FunCoup" id="Q9D8U3">
    <property type="interactions" value="333"/>
</dbReference>
<dbReference type="STRING" id="10090.ENSMUSP00000032343"/>
<dbReference type="GlyCosmos" id="Q9D8U3">
    <property type="glycosylation" value="2 sites, No reported glycans"/>
</dbReference>
<dbReference type="GlyGen" id="Q9D8U3">
    <property type="glycosylation" value="2 sites"/>
</dbReference>
<dbReference type="PaxDb" id="10090-ENSMUSP00000032343"/>
<dbReference type="ProteomicsDB" id="275800"/>
<dbReference type="Antibodypedia" id="23696">
    <property type="antibodies" value="100 antibodies from 20 providers"/>
</dbReference>
<dbReference type="Ensembl" id="ENSMUST00000032343.7">
    <property type="protein sequence ID" value="ENSMUSP00000032343.7"/>
    <property type="gene ID" value="ENSMUSG00000030219.14"/>
</dbReference>
<dbReference type="GeneID" id="69187"/>
<dbReference type="KEGG" id="mmu:69187"/>
<dbReference type="UCSC" id="uc009emm.1">
    <property type="organism name" value="mouse"/>
</dbReference>
<dbReference type="AGR" id="MGI:1916437"/>
<dbReference type="CTD" id="121506"/>
<dbReference type="MGI" id="MGI:1916437">
    <property type="gene designation" value="Erp27"/>
</dbReference>
<dbReference type="VEuPathDB" id="HostDB:ENSMUSG00000030219"/>
<dbReference type="eggNOG" id="KOG0191">
    <property type="taxonomic scope" value="Eukaryota"/>
</dbReference>
<dbReference type="GeneTree" id="ENSGT00930000151058"/>
<dbReference type="HOGENOM" id="CLU_088451_0_0_1"/>
<dbReference type="InParanoid" id="Q9D8U3"/>
<dbReference type="OMA" id="EESHGYK"/>
<dbReference type="OrthoDB" id="8667660at2759"/>
<dbReference type="PhylomeDB" id="Q9D8U3"/>
<dbReference type="TreeFam" id="TF106381"/>
<dbReference type="BioGRID-ORCS" id="69187">
    <property type="hits" value="2 hits in 78 CRISPR screens"/>
</dbReference>
<dbReference type="ChiTaRS" id="Erp27">
    <property type="organism name" value="mouse"/>
</dbReference>
<dbReference type="PRO" id="PR:Q9D8U3"/>
<dbReference type="Proteomes" id="UP000000589">
    <property type="component" value="Chromosome 6"/>
</dbReference>
<dbReference type="RNAct" id="Q9D8U3">
    <property type="molecule type" value="protein"/>
</dbReference>
<dbReference type="Bgee" id="ENSMUSG00000030219">
    <property type="expression patterns" value="Expressed in pancreas and 30 other cell types or tissues"/>
</dbReference>
<dbReference type="GO" id="GO:0005788">
    <property type="term" value="C:endoplasmic reticulum lumen"/>
    <property type="evidence" value="ECO:0007669"/>
    <property type="project" value="UniProtKB-SubCell"/>
</dbReference>
<dbReference type="GO" id="GO:0006986">
    <property type="term" value="P:response to unfolded protein"/>
    <property type="evidence" value="ECO:0007669"/>
    <property type="project" value="UniProtKB-KW"/>
</dbReference>
<dbReference type="CDD" id="cd02982">
    <property type="entry name" value="PDI_b'_family"/>
    <property type="match status" value="1"/>
</dbReference>
<dbReference type="CDD" id="cd02981">
    <property type="entry name" value="PDI_b_family"/>
    <property type="match status" value="1"/>
</dbReference>
<dbReference type="FunFam" id="3.40.30.10:FF:000212">
    <property type="entry name" value="Endoplasmic reticulum resident protein 27"/>
    <property type="match status" value="1"/>
</dbReference>
<dbReference type="FunFam" id="3.40.30.10:FF:000232">
    <property type="entry name" value="Endoplasmic reticulum resident protein 27"/>
    <property type="match status" value="1"/>
</dbReference>
<dbReference type="Gene3D" id="3.40.30.10">
    <property type="entry name" value="Glutaredoxin"/>
    <property type="match status" value="2"/>
</dbReference>
<dbReference type="InterPro" id="IPR036249">
    <property type="entry name" value="Thioredoxin-like_sf"/>
</dbReference>
<dbReference type="PANTHER" id="PTHR18929:SF193">
    <property type="entry name" value="ENDOPLASMIC RETICULUM RESIDENT PROTEIN 27"/>
    <property type="match status" value="1"/>
</dbReference>
<dbReference type="PANTHER" id="PTHR18929">
    <property type="entry name" value="PROTEIN DISULFIDE ISOMERASE"/>
    <property type="match status" value="1"/>
</dbReference>
<dbReference type="Pfam" id="PF13848">
    <property type="entry name" value="Thioredoxin_6"/>
    <property type="match status" value="1"/>
</dbReference>
<dbReference type="SUPFAM" id="SSF52833">
    <property type="entry name" value="Thioredoxin-like"/>
    <property type="match status" value="2"/>
</dbReference>
<dbReference type="PROSITE" id="PS00014">
    <property type="entry name" value="ER_TARGET"/>
    <property type="match status" value="1"/>
</dbReference>
<protein>
    <recommendedName>
        <fullName>Endoplasmic reticulum resident protein 27</fullName>
        <shortName>ER protein 27</shortName>
        <shortName>ERp27</shortName>
    </recommendedName>
    <alternativeName>
        <fullName evidence="3">Inactive protein disulfide-isomerase 27</fullName>
    </alternativeName>
</protein>
<proteinExistence type="evidence at protein level"/>
<gene>
    <name type="primary">Erp27</name>
</gene>
<name>ERP27_MOUSE</name>
<feature type="signal peptide" evidence="2">
    <location>
        <begin position="1"/>
        <end position="25"/>
    </location>
</feature>
<feature type="chain" id="PRO_0000281119" description="Endoplasmic reticulum resident protein 27">
    <location>
        <begin position="26"/>
        <end position="272"/>
    </location>
</feature>
<feature type="domain" description="Thioredoxin" evidence="3">
    <location>
        <begin position="39"/>
        <end position="152"/>
    </location>
</feature>
<feature type="region of interest" description="PDIA3-binding site" evidence="1">
    <location>
        <begin position="230"/>
        <end position="233"/>
    </location>
</feature>
<feature type="short sequence motif" description="Prevents secretion from ER" evidence="1">
    <location>
        <begin position="269"/>
        <end position="272"/>
    </location>
</feature>
<feature type="glycosylation site" description="N-linked (GlcNAc...) asparagine" evidence="2">
    <location>
        <position position="91"/>
    </location>
</feature>
<feature type="glycosylation site" description="N-linked (GlcNAc...) asparagine" evidence="2">
    <location>
        <position position="100"/>
    </location>
</feature>
<feature type="sequence conflict" description="In Ref. 2; AAI04407/AAI04408." evidence="3" ref="2">
    <original>N</original>
    <variation>S</variation>
    <location>
        <position position="104"/>
    </location>
</feature>
<feature type="sequence conflict" description="In Ref. 2; AAI04407/AAI04408." evidence="3" ref="2">
    <original>V</original>
    <variation>M</variation>
    <location>
        <position position="138"/>
    </location>
</feature>
<feature type="sequence conflict" description="In Ref. 2; AAI04407/AAI04408." evidence="3" ref="2">
    <original>H</original>
    <variation>L</variation>
    <location>
        <position position="261"/>
    </location>
</feature>